<accession>Q8F421</accession>
<dbReference type="EC" id="3.1.3.11" evidence="1"/>
<dbReference type="EMBL" id="AE010300">
    <property type="protein sequence ID" value="AAN49425.1"/>
    <property type="status" value="ALT_INIT"/>
    <property type="molecule type" value="Genomic_DNA"/>
</dbReference>
<dbReference type="RefSeq" id="NP_712407.1">
    <property type="nucleotide sequence ID" value="NC_004342.2"/>
</dbReference>
<dbReference type="RefSeq" id="WP_000110726.1">
    <property type="nucleotide sequence ID" value="NC_004342.2"/>
</dbReference>
<dbReference type="SMR" id="Q8F421"/>
<dbReference type="FunCoup" id="Q8F421">
    <property type="interactions" value="379"/>
</dbReference>
<dbReference type="STRING" id="189518.LA_2226"/>
<dbReference type="PaxDb" id="189518-LA_2226"/>
<dbReference type="EnsemblBacteria" id="AAN49425">
    <property type="protein sequence ID" value="AAN49425"/>
    <property type="gene ID" value="LA_2226"/>
</dbReference>
<dbReference type="GeneID" id="61141605"/>
<dbReference type="KEGG" id="lil:LA_2226"/>
<dbReference type="PATRIC" id="fig|189518.3.peg.2215"/>
<dbReference type="HOGENOM" id="CLU_039977_2_2_12"/>
<dbReference type="InParanoid" id="Q8F421"/>
<dbReference type="OrthoDB" id="9806756at2"/>
<dbReference type="UniPathway" id="UPA00138"/>
<dbReference type="Proteomes" id="UP000001408">
    <property type="component" value="Chromosome I"/>
</dbReference>
<dbReference type="GO" id="GO:0005737">
    <property type="term" value="C:cytoplasm"/>
    <property type="evidence" value="ECO:0000318"/>
    <property type="project" value="GO_Central"/>
</dbReference>
<dbReference type="GO" id="GO:0005829">
    <property type="term" value="C:cytosol"/>
    <property type="evidence" value="ECO:0000318"/>
    <property type="project" value="GO_Central"/>
</dbReference>
<dbReference type="GO" id="GO:0042132">
    <property type="term" value="F:fructose 1,6-bisphosphate 1-phosphatase activity"/>
    <property type="evidence" value="ECO:0000318"/>
    <property type="project" value="GO_Central"/>
</dbReference>
<dbReference type="GO" id="GO:0000287">
    <property type="term" value="F:magnesium ion binding"/>
    <property type="evidence" value="ECO:0007669"/>
    <property type="project" value="UniProtKB-UniRule"/>
</dbReference>
<dbReference type="GO" id="GO:0030388">
    <property type="term" value="P:fructose 1,6-bisphosphate metabolic process"/>
    <property type="evidence" value="ECO:0000318"/>
    <property type="project" value="GO_Central"/>
</dbReference>
<dbReference type="GO" id="GO:0006002">
    <property type="term" value="P:fructose 6-phosphate metabolic process"/>
    <property type="evidence" value="ECO:0000318"/>
    <property type="project" value="GO_Central"/>
</dbReference>
<dbReference type="GO" id="GO:0006000">
    <property type="term" value="P:fructose metabolic process"/>
    <property type="evidence" value="ECO:0000318"/>
    <property type="project" value="GO_Central"/>
</dbReference>
<dbReference type="GO" id="GO:0006094">
    <property type="term" value="P:gluconeogenesis"/>
    <property type="evidence" value="ECO:0000318"/>
    <property type="project" value="GO_Central"/>
</dbReference>
<dbReference type="CDD" id="cd00354">
    <property type="entry name" value="FBPase"/>
    <property type="match status" value="1"/>
</dbReference>
<dbReference type="FunFam" id="3.30.540.10:FF:000002">
    <property type="entry name" value="Fructose-1,6-bisphosphatase class 1"/>
    <property type="match status" value="1"/>
</dbReference>
<dbReference type="FunFam" id="3.40.190.80:FF:000001">
    <property type="entry name" value="Fructose-1,6-bisphosphatase class 1"/>
    <property type="match status" value="1"/>
</dbReference>
<dbReference type="Gene3D" id="3.40.190.80">
    <property type="match status" value="1"/>
</dbReference>
<dbReference type="Gene3D" id="3.30.540.10">
    <property type="entry name" value="Fructose-1,6-Bisphosphatase, subunit A, domain 1"/>
    <property type="match status" value="1"/>
</dbReference>
<dbReference type="HAMAP" id="MF_01855">
    <property type="entry name" value="FBPase_class1"/>
    <property type="match status" value="1"/>
</dbReference>
<dbReference type="InterPro" id="IPR044015">
    <property type="entry name" value="FBPase_C_dom"/>
</dbReference>
<dbReference type="InterPro" id="IPR000146">
    <property type="entry name" value="FBPase_class-1"/>
</dbReference>
<dbReference type="InterPro" id="IPR033391">
    <property type="entry name" value="FBPase_N"/>
</dbReference>
<dbReference type="InterPro" id="IPR028343">
    <property type="entry name" value="FBPtase"/>
</dbReference>
<dbReference type="InterPro" id="IPR020548">
    <property type="entry name" value="Fructose_bisphosphatase_AS"/>
</dbReference>
<dbReference type="NCBIfam" id="NF006778">
    <property type="entry name" value="PRK09293.1-1"/>
    <property type="match status" value="1"/>
</dbReference>
<dbReference type="PANTHER" id="PTHR11556">
    <property type="entry name" value="FRUCTOSE-1,6-BISPHOSPHATASE-RELATED"/>
    <property type="match status" value="1"/>
</dbReference>
<dbReference type="PANTHER" id="PTHR11556:SF35">
    <property type="entry name" value="SEDOHEPTULOSE-1,7-BISPHOSPHATASE, CHLOROPLASTIC"/>
    <property type="match status" value="1"/>
</dbReference>
<dbReference type="Pfam" id="PF00316">
    <property type="entry name" value="FBPase"/>
    <property type="match status" value="1"/>
</dbReference>
<dbReference type="Pfam" id="PF18913">
    <property type="entry name" value="FBPase_C"/>
    <property type="match status" value="1"/>
</dbReference>
<dbReference type="PIRSF" id="PIRSF500210">
    <property type="entry name" value="FBPtase"/>
    <property type="match status" value="1"/>
</dbReference>
<dbReference type="PIRSF" id="PIRSF000904">
    <property type="entry name" value="FBPtase_SBPase"/>
    <property type="match status" value="1"/>
</dbReference>
<dbReference type="PRINTS" id="PR00115">
    <property type="entry name" value="F16BPHPHTASE"/>
</dbReference>
<dbReference type="SUPFAM" id="SSF56655">
    <property type="entry name" value="Carbohydrate phosphatase"/>
    <property type="match status" value="1"/>
</dbReference>
<dbReference type="PROSITE" id="PS00124">
    <property type="entry name" value="FBPASE"/>
    <property type="match status" value="1"/>
</dbReference>
<proteinExistence type="inferred from homology"/>
<feature type="chain" id="PRO_0000364588" description="Fructose-1,6-bisphosphatase class 1">
    <location>
        <begin position="1"/>
        <end position="342"/>
    </location>
</feature>
<feature type="binding site" evidence="1">
    <location>
        <position position="97"/>
    </location>
    <ligand>
        <name>Mg(2+)</name>
        <dbReference type="ChEBI" id="CHEBI:18420"/>
        <label>1</label>
    </ligand>
</feature>
<feature type="binding site" evidence="1">
    <location>
        <position position="119"/>
    </location>
    <ligand>
        <name>Mg(2+)</name>
        <dbReference type="ChEBI" id="CHEBI:18420"/>
        <label>1</label>
    </ligand>
</feature>
<feature type="binding site" evidence="1">
    <location>
        <position position="119"/>
    </location>
    <ligand>
        <name>Mg(2+)</name>
        <dbReference type="ChEBI" id="CHEBI:18420"/>
        <label>2</label>
    </ligand>
</feature>
<feature type="binding site" evidence="1">
    <location>
        <position position="121"/>
    </location>
    <ligand>
        <name>Mg(2+)</name>
        <dbReference type="ChEBI" id="CHEBI:18420"/>
        <label>1</label>
    </ligand>
</feature>
<feature type="binding site" evidence="1">
    <location>
        <begin position="122"/>
        <end position="125"/>
    </location>
    <ligand>
        <name>substrate</name>
    </ligand>
</feature>
<feature type="binding site" evidence="1">
    <location>
        <position position="122"/>
    </location>
    <ligand>
        <name>Mg(2+)</name>
        <dbReference type="ChEBI" id="CHEBI:18420"/>
        <label>2</label>
    </ligand>
</feature>
<feature type="binding site" evidence="1">
    <location>
        <position position="215"/>
    </location>
    <ligand>
        <name>substrate</name>
    </ligand>
</feature>
<feature type="binding site" evidence="1">
    <location>
        <position position="247"/>
    </location>
    <ligand>
        <name>substrate</name>
    </ligand>
</feature>
<feature type="binding site" evidence="1">
    <location>
        <position position="280"/>
    </location>
    <ligand>
        <name>substrate</name>
    </ligand>
</feature>
<feature type="binding site" evidence="1">
    <location>
        <position position="286"/>
    </location>
    <ligand>
        <name>Mg(2+)</name>
        <dbReference type="ChEBI" id="CHEBI:18420"/>
        <label>2</label>
    </ligand>
</feature>
<keyword id="KW-0119">Carbohydrate metabolism</keyword>
<keyword id="KW-0963">Cytoplasm</keyword>
<keyword id="KW-0378">Hydrolase</keyword>
<keyword id="KW-0460">Magnesium</keyword>
<keyword id="KW-0479">Metal-binding</keyword>
<keyword id="KW-1185">Reference proteome</keyword>
<sequence>MSVHPTQTLSLSQYLIEEQLKLPQATGDFTALMSHLVYAAKIVSREVRKAGLLENILGATETVNVQGETQMKLDEYADKVFNHTLTRSGHLCILGSEEHEETVPVPNGYKIGKYTIAIDPLDGSSNIDANVSIGTIFSVHLRKSPAGTPGTLSDLLQQGSGQRAAGYVLYGSSTMLILCTGKGVSGFTLDPSCGEFILSHPDMQIPETGGIYSINEGNYNYWSDEVKNYIRDIKSIEGGRKPQSGRYIGSLVADFHRNLLKGGIFLYPNDTKSTKYPNGKLRLLYEAAPMAFIAEQAGGMAVTVYGERILDLTPKELHERTTLVVGSKKEVEHFLKFAPKKS</sequence>
<comment type="catalytic activity">
    <reaction evidence="1">
        <text>beta-D-fructose 1,6-bisphosphate + H2O = beta-D-fructose 6-phosphate + phosphate</text>
        <dbReference type="Rhea" id="RHEA:11064"/>
        <dbReference type="ChEBI" id="CHEBI:15377"/>
        <dbReference type="ChEBI" id="CHEBI:32966"/>
        <dbReference type="ChEBI" id="CHEBI:43474"/>
        <dbReference type="ChEBI" id="CHEBI:57634"/>
        <dbReference type="EC" id="3.1.3.11"/>
    </reaction>
</comment>
<comment type="cofactor">
    <cofactor evidence="1">
        <name>Mg(2+)</name>
        <dbReference type="ChEBI" id="CHEBI:18420"/>
    </cofactor>
    <text evidence="1">Binds 2 magnesium ions per subunit.</text>
</comment>
<comment type="pathway">
    <text evidence="1">Carbohydrate biosynthesis; gluconeogenesis.</text>
</comment>
<comment type="subunit">
    <text evidence="1">Homotetramer.</text>
</comment>
<comment type="subcellular location">
    <subcellularLocation>
        <location evidence="1">Cytoplasm</location>
    </subcellularLocation>
</comment>
<comment type="similarity">
    <text evidence="1">Belongs to the FBPase class 1 family.</text>
</comment>
<comment type="sequence caution" evidence="2">
    <conflict type="erroneous initiation">
        <sequence resource="EMBL-CDS" id="AAN49425"/>
    </conflict>
</comment>
<protein>
    <recommendedName>
        <fullName evidence="1">Fructose-1,6-bisphosphatase class 1</fullName>
        <shortName evidence="1">FBPase class 1</shortName>
        <ecNumber evidence="1">3.1.3.11</ecNumber>
    </recommendedName>
    <alternativeName>
        <fullName evidence="1">D-fructose-1,6-bisphosphate 1-phosphohydrolase class 1</fullName>
    </alternativeName>
</protein>
<name>F16PA_LEPIN</name>
<evidence type="ECO:0000255" key="1">
    <source>
        <dbReference type="HAMAP-Rule" id="MF_01855"/>
    </source>
</evidence>
<evidence type="ECO:0000305" key="2"/>
<organism>
    <name type="scientific">Leptospira interrogans serogroup Icterohaemorrhagiae serovar Lai (strain 56601)</name>
    <dbReference type="NCBI Taxonomy" id="189518"/>
    <lineage>
        <taxon>Bacteria</taxon>
        <taxon>Pseudomonadati</taxon>
        <taxon>Spirochaetota</taxon>
        <taxon>Spirochaetia</taxon>
        <taxon>Leptospirales</taxon>
        <taxon>Leptospiraceae</taxon>
        <taxon>Leptospira</taxon>
    </lineage>
</organism>
<gene>
    <name evidence="1" type="primary">fbp</name>
    <name type="ordered locus">LA_2226</name>
</gene>
<reference key="1">
    <citation type="journal article" date="2003" name="Nature">
        <title>Unique physiological and pathogenic features of Leptospira interrogans revealed by whole-genome sequencing.</title>
        <authorList>
            <person name="Ren S.-X."/>
            <person name="Fu G."/>
            <person name="Jiang X.-G."/>
            <person name="Zeng R."/>
            <person name="Miao Y.-G."/>
            <person name="Xu H."/>
            <person name="Zhang Y.-X."/>
            <person name="Xiong H."/>
            <person name="Lu G."/>
            <person name="Lu L.-F."/>
            <person name="Jiang H.-Q."/>
            <person name="Jia J."/>
            <person name="Tu Y.-F."/>
            <person name="Jiang J.-X."/>
            <person name="Gu W.-Y."/>
            <person name="Zhang Y.-Q."/>
            <person name="Cai Z."/>
            <person name="Sheng H.-H."/>
            <person name="Yin H.-F."/>
            <person name="Zhang Y."/>
            <person name="Zhu G.-F."/>
            <person name="Wan M."/>
            <person name="Huang H.-L."/>
            <person name="Qian Z."/>
            <person name="Wang S.-Y."/>
            <person name="Ma W."/>
            <person name="Yao Z.-J."/>
            <person name="Shen Y."/>
            <person name="Qiang B.-Q."/>
            <person name="Xia Q.-C."/>
            <person name="Guo X.-K."/>
            <person name="Danchin A."/>
            <person name="Saint Girons I."/>
            <person name="Somerville R.L."/>
            <person name="Wen Y.-M."/>
            <person name="Shi M.-H."/>
            <person name="Chen Z."/>
            <person name="Xu J.-G."/>
            <person name="Zhao G.-P."/>
        </authorList>
    </citation>
    <scope>NUCLEOTIDE SEQUENCE [LARGE SCALE GENOMIC DNA]</scope>
    <source>
        <strain>56601</strain>
    </source>
</reference>